<feature type="chain" id="PRO_0000355284" description="Snaclec ophioluxin subunit beta">
    <location>
        <begin position="1"/>
        <end position="13" status="greater than"/>
    </location>
</feature>
<feature type="domain" description="C-type lectin" evidence="1">
    <location>
        <begin position="11"/>
        <end position="13" status="greater than"/>
    </location>
</feature>
<feature type="non-terminal residue">
    <location>
        <position position="13"/>
    </location>
</feature>
<accession>P0C8J1</accession>
<proteinExistence type="evidence at protein level"/>
<dbReference type="GO" id="GO:0005576">
    <property type="term" value="C:extracellular region"/>
    <property type="evidence" value="ECO:0007669"/>
    <property type="project" value="UniProtKB-SubCell"/>
</dbReference>
<dbReference type="GO" id="GO:0090729">
    <property type="term" value="F:toxin activity"/>
    <property type="evidence" value="ECO:0007669"/>
    <property type="project" value="UniProtKB-KW"/>
</dbReference>
<protein>
    <recommendedName>
        <fullName>Snaclec ophioluxin subunit beta</fullName>
    </recommendedName>
</protein>
<sequence length="13" mass="1413">GLCCPMRWSSSEG</sequence>
<keyword id="KW-0903">Direct protein sequencing</keyword>
<keyword id="KW-1015">Disulfide bond</keyword>
<keyword id="KW-0325">Glycoprotein</keyword>
<keyword id="KW-1199">Hemostasis impairing toxin</keyword>
<keyword id="KW-1202">Platelet aggregation activating toxin</keyword>
<keyword id="KW-0964">Secreted</keyword>
<keyword id="KW-0800">Toxin</keyword>
<organism>
    <name type="scientific">Ophiophagus hannah</name>
    <name type="common">King cobra</name>
    <name type="synonym">Naja hannah</name>
    <dbReference type="NCBI Taxonomy" id="8665"/>
    <lineage>
        <taxon>Eukaryota</taxon>
        <taxon>Metazoa</taxon>
        <taxon>Chordata</taxon>
        <taxon>Craniata</taxon>
        <taxon>Vertebrata</taxon>
        <taxon>Euteleostomi</taxon>
        <taxon>Lepidosauria</taxon>
        <taxon>Squamata</taxon>
        <taxon>Bifurcata</taxon>
        <taxon>Unidentata</taxon>
        <taxon>Episquamata</taxon>
        <taxon>Toxicofera</taxon>
        <taxon>Serpentes</taxon>
        <taxon>Colubroidea</taxon>
        <taxon>Elapidae</taxon>
        <taxon>Elapinae</taxon>
        <taxon>Ophiophagus</taxon>
    </lineage>
</organism>
<evidence type="ECO:0000255" key="1">
    <source>
        <dbReference type="PROSITE-ProRule" id="PRU00040"/>
    </source>
</evidence>
<evidence type="ECO:0000269" key="2">
    <source>
    </source>
</evidence>
<evidence type="ECO:0000305" key="3"/>
<evidence type="ECO:0000305" key="4">
    <source>
    </source>
</evidence>
<comment type="function">
    <text evidence="2">Binds to the platelet and collagen receptor glycoprotein VI (GP6) and activates platelet aggregation.</text>
</comment>
<comment type="subunit">
    <text>Heterodimer of subunits alpha and beta; disulfide-linked.</text>
</comment>
<comment type="subcellular location">
    <subcellularLocation>
        <location>Secreted</location>
    </subcellularLocation>
</comment>
<comment type="tissue specificity">
    <text>Expressed by the venom gland.</text>
</comment>
<comment type="PTM">
    <text>May be glycosylated.</text>
</comment>
<comment type="miscellaneous">
    <text evidence="4">Negative results: does not agglutinate fixed platelets.</text>
</comment>
<comment type="similarity">
    <text evidence="3">Belongs to the snaclec family.</text>
</comment>
<reference key="1">
    <citation type="journal article" date="2002" name="J. Biol. Chem.">
        <title>Ophioluxin, a convulxin-like C-type lectin from Ophiophagus hannah (King cobra) is a powerful platelet activator via glycoprotein VI.</title>
        <authorList>
            <person name="Du X.-Y."/>
            <person name="Clemetson J.M."/>
            <person name="Navdaev A."/>
            <person name="Magnenat E.M."/>
            <person name="Wells T.N.C."/>
            <person name="Clemetson K.J."/>
        </authorList>
    </citation>
    <scope>PROTEIN SEQUENCE</scope>
    <scope>FUNCTION</scope>
    <source>
        <tissue>Venom</tissue>
    </source>
</reference>
<name>SLB_OPHHA</name>